<reference key="1">
    <citation type="submission" date="2006-05" db="EMBL/GenBank/DDBJ databases">
        <authorList>
            <consortium name="Genoscope"/>
        </authorList>
    </citation>
    <scope>NUCLEOTIDE SEQUENCE [LARGE SCALE GENOMIC DNA]</scope>
    <source>
        <strain>WH7803</strain>
    </source>
</reference>
<organism>
    <name type="scientific">Synechococcus sp. (strain WH7803)</name>
    <dbReference type="NCBI Taxonomy" id="32051"/>
    <lineage>
        <taxon>Bacteria</taxon>
        <taxon>Bacillati</taxon>
        <taxon>Cyanobacteriota</taxon>
        <taxon>Cyanophyceae</taxon>
        <taxon>Synechococcales</taxon>
        <taxon>Synechococcaceae</taxon>
        <taxon>Synechococcus</taxon>
    </lineage>
</organism>
<proteinExistence type="inferred from homology"/>
<evidence type="ECO:0000250" key="1"/>
<evidence type="ECO:0000255" key="2">
    <source>
        <dbReference type="HAMAP-Rule" id="MF_00118"/>
    </source>
</evidence>
<name>EFTU_SYNPW</name>
<dbReference type="EC" id="3.6.5.3" evidence="2"/>
<dbReference type="EMBL" id="CT971583">
    <property type="protein sequence ID" value="CAK22805.1"/>
    <property type="molecule type" value="Genomic_DNA"/>
</dbReference>
<dbReference type="SMR" id="A5GIP0"/>
<dbReference type="STRING" id="32051.SynWH7803_0379"/>
<dbReference type="KEGG" id="syx:SynWH7803_0379"/>
<dbReference type="eggNOG" id="COG0050">
    <property type="taxonomic scope" value="Bacteria"/>
</dbReference>
<dbReference type="HOGENOM" id="CLU_007265_0_1_3"/>
<dbReference type="OrthoDB" id="9804504at2"/>
<dbReference type="Proteomes" id="UP000001566">
    <property type="component" value="Chromosome"/>
</dbReference>
<dbReference type="GO" id="GO:0005829">
    <property type="term" value="C:cytosol"/>
    <property type="evidence" value="ECO:0007669"/>
    <property type="project" value="TreeGrafter"/>
</dbReference>
<dbReference type="GO" id="GO:0005525">
    <property type="term" value="F:GTP binding"/>
    <property type="evidence" value="ECO:0007669"/>
    <property type="project" value="UniProtKB-UniRule"/>
</dbReference>
<dbReference type="GO" id="GO:0003924">
    <property type="term" value="F:GTPase activity"/>
    <property type="evidence" value="ECO:0007669"/>
    <property type="project" value="InterPro"/>
</dbReference>
<dbReference type="GO" id="GO:0003746">
    <property type="term" value="F:translation elongation factor activity"/>
    <property type="evidence" value="ECO:0007669"/>
    <property type="project" value="UniProtKB-UniRule"/>
</dbReference>
<dbReference type="CDD" id="cd01884">
    <property type="entry name" value="EF_Tu"/>
    <property type="match status" value="1"/>
</dbReference>
<dbReference type="CDD" id="cd03697">
    <property type="entry name" value="EFTU_II"/>
    <property type="match status" value="1"/>
</dbReference>
<dbReference type="CDD" id="cd03707">
    <property type="entry name" value="EFTU_III"/>
    <property type="match status" value="1"/>
</dbReference>
<dbReference type="FunFam" id="2.40.30.10:FF:000001">
    <property type="entry name" value="Elongation factor Tu"/>
    <property type="match status" value="1"/>
</dbReference>
<dbReference type="FunFam" id="2.40.30.10:FF:000046">
    <property type="entry name" value="Elongation factor Tu"/>
    <property type="match status" value="1"/>
</dbReference>
<dbReference type="FunFam" id="3.40.50.300:FF:000003">
    <property type="entry name" value="Elongation factor Tu"/>
    <property type="match status" value="1"/>
</dbReference>
<dbReference type="Gene3D" id="3.40.50.300">
    <property type="entry name" value="P-loop containing nucleotide triphosphate hydrolases"/>
    <property type="match status" value="1"/>
</dbReference>
<dbReference type="Gene3D" id="2.40.30.10">
    <property type="entry name" value="Translation factors"/>
    <property type="match status" value="2"/>
</dbReference>
<dbReference type="HAMAP" id="MF_00118_B">
    <property type="entry name" value="EF_Tu_B"/>
    <property type="match status" value="1"/>
</dbReference>
<dbReference type="InterPro" id="IPR041709">
    <property type="entry name" value="EF-Tu_GTP-bd"/>
</dbReference>
<dbReference type="InterPro" id="IPR050055">
    <property type="entry name" value="EF-Tu_GTPase"/>
</dbReference>
<dbReference type="InterPro" id="IPR004161">
    <property type="entry name" value="EFTu-like_2"/>
</dbReference>
<dbReference type="InterPro" id="IPR033720">
    <property type="entry name" value="EFTU_2"/>
</dbReference>
<dbReference type="InterPro" id="IPR031157">
    <property type="entry name" value="G_TR_CS"/>
</dbReference>
<dbReference type="InterPro" id="IPR027417">
    <property type="entry name" value="P-loop_NTPase"/>
</dbReference>
<dbReference type="InterPro" id="IPR005225">
    <property type="entry name" value="Small_GTP-bd"/>
</dbReference>
<dbReference type="InterPro" id="IPR000795">
    <property type="entry name" value="T_Tr_GTP-bd_dom"/>
</dbReference>
<dbReference type="InterPro" id="IPR009000">
    <property type="entry name" value="Transl_B-barrel_sf"/>
</dbReference>
<dbReference type="InterPro" id="IPR009001">
    <property type="entry name" value="Transl_elong_EF1A/Init_IF2_C"/>
</dbReference>
<dbReference type="InterPro" id="IPR004541">
    <property type="entry name" value="Transl_elong_EFTu/EF1A_bac/org"/>
</dbReference>
<dbReference type="InterPro" id="IPR004160">
    <property type="entry name" value="Transl_elong_EFTu/EF1A_C"/>
</dbReference>
<dbReference type="NCBIfam" id="TIGR00485">
    <property type="entry name" value="EF-Tu"/>
    <property type="match status" value="1"/>
</dbReference>
<dbReference type="NCBIfam" id="NF000766">
    <property type="entry name" value="PRK00049.1"/>
    <property type="match status" value="1"/>
</dbReference>
<dbReference type="NCBIfam" id="NF009372">
    <property type="entry name" value="PRK12735.1"/>
    <property type="match status" value="1"/>
</dbReference>
<dbReference type="NCBIfam" id="NF009373">
    <property type="entry name" value="PRK12736.1"/>
    <property type="match status" value="1"/>
</dbReference>
<dbReference type="NCBIfam" id="TIGR00231">
    <property type="entry name" value="small_GTP"/>
    <property type="match status" value="1"/>
</dbReference>
<dbReference type="PANTHER" id="PTHR43721:SF22">
    <property type="entry name" value="ELONGATION FACTOR TU, MITOCHONDRIAL"/>
    <property type="match status" value="1"/>
</dbReference>
<dbReference type="PANTHER" id="PTHR43721">
    <property type="entry name" value="ELONGATION FACTOR TU-RELATED"/>
    <property type="match status" value="1"/>
</dbReference>
<dbReference type="Pfam" id="PF00009">
    <property type="entry name" value="GTP_EFTU"/>
    <property type="match status" value="1"/>
</dbReference>
<dbReference type="Pfam" id="PF03144">
    <property type="entry name" value="GTP_EFTU_D2"/>
    <property type="match status" value="1"/>
</dbReference>
<dbReference type="Pfam" id="PF03143">
    <property type="entry name" value="GTP_EFTU_D3"/>
    <property type="match status" value="1"/>
</dbReference>
<dbReference type="PRINTS" id="PR00315">
    <property type="entry name" value="ELONGATNFCT"/>
</dbReference>
<dbReference type="SUPFAM" id="SSF50465">
    <property type="entry name" value="EF-Tu/eEF-1alpha/eIF2-gamma C-terminal domain"/>
    <property type="match status" value="1"/>
</dbReference>
<dbReference type="SUPFAM" id="SSF52540">
    <property type="entry name" value="P-loop containing nucleoside triphosphate hydrolases"/>
    <property type="match status" value="1"/>
</dbReference>
<dbReference type="SUPFAM" id="SSF50447">
    <property type="entry name" value="Translation proteins"/>
    <property type="match status" value="1"/>
</dbReference>
<dbReference type="PROSITE" id="PS00301">
    <property type="entry name" value="G_TR_1"/>
    <property type="match status" value="1"/>
</dbReference>
<dbReference type="PROSITE" id="PS51722">
    <property type="entry name" value="G_TR_2"/>
    <property type="match status" value="1"/>
</dbReference>
<gene>
    <name evidence="2" type="primary">tuf</name>
    <name type="ordered locus">SynWH7803_0379</name>
</gene>
<sequence length="399" mass="43674">MAREKFERNKPHVNIGTIGHVDHGKTTLTAAITNVLAKKGQAKVQDYADIDGAPEERERGITINTAHVEYETDTRHYAHVDCPGHADYVKNMITGAAQMDGAILVCAATDGPMAQTKEHILLAKQVGVPALVVALNKCDMVDDEEIIELVEMEIRELLSSYDFPGDDIPVVQVSGLKAIEGEAEWEAKIDELMQAVDANIPEPEREVDKPFLMAIEDVFSITGRGTVATGRIERGIVKVGEEIEIVGIKDTRKTTVTGVEMFRKLLDEGMAGDNVGLLLRGIQKEDIERGMVLVKPGSITPHTKFEGEVYVLKKEEGGRHTPFFAGYRPQFYIRTTDVTGQITAFTADDGSDVEMVMPGDRIKMTGELICPVAIEQGMRFAIREGGRTIGAGVVSKIIE</sequence>
<feature type="chain" id="PRO_1000015770" description="Elongation factor Tu">
    <location>
        <begin position="1"/>
        <end position="399"/>
    </location>
</feature>
<feature type="domain" description="tr-type G">
    <location>
        <begin position="10"/>
        <end position="204"/>
    </location>
</feature>
<feature type="region of interest" description="G1" evidence="1">
    <location>
        <begin position="19"/>
        <end position="26"/>
    </location>
</feature>
<feature type="region of interest" description="G2" evidence="1">
    <location>
        <begin position="60"/>
        <end position="64"/>
    </location>
</feature>
<feature type="region of interest" description="G3" evidence="1">
    <location>
        <begin position="81"/>
        <end position="84"/>
    </location>
</feature>
<feature type="region of interest" description="G4" evidence="1">
    <location>
        <begin position="136"/>
        <end position="139"/>
    </location>
</feature>
<feature type="region of interest" description="G5" evidence="1">
    <location>
        <begin position="174"/>
        <end position="176"/>
    </location>
</feature>
<feature type="binding site" evidence="2">
    <location>
        <begin position="19"/>
        <end position="26"/>
    </location>
    <ligand>
        <name>GTP</name>
        <dbReference type="ChEBI" id="CHEBI:37565"/>
    </ligand>
</feature>
<feature type="binding site" evidence="2">
    <location>
        <position position="26"/>
    </location>
    <ligand>
        <name>Mg(2+)</name>
        <dbReference type="ChEBI" id="CHEBI:18420"/>
    </ligand>
</feature>
<feature type="binding site" evidence="2">
    <location>
        <begin position="81"/>
        <end position="85"/>
    </location>
    <ligand>
        <name>GTP</name>
        <dbReference type="ChEBI" id="CHEBI:37565"/>
    </ligand>
</feature>
<feature type="binding site" evidence="2">
    <location>
        <begin position="136"/>
        <end position="139"/>
    </location>
    <ligand>
        <name>GTP</name>
        <dbReference type="ChEBI" id="CHEBI:37565"/>
    </ligand>
</feature>
<protein>
    <recommendedName>
        <fullName evidence="2">Elongation factor Tu</fullName>
        <shortName evidence="2">EF-Tu</shortName>
        <ecNumber evidence="2">3.6.5.3</ecNumber>
    </recommendedName>
</protein>
<keyword id="KW-0963">Cytoplasm</keyword>
<keyword id="KW-0251">Elongation factor</keyword>
<keyword id="KW-0342">GTP-binding</keyword>
<keyword id="KW-0378">Hydrolase</keyword>
<keyword id="KW-0460">Magnesium</keyword>
<keyword id="KW-0479">Metal-binding</keyword>
<keyword id="KW-0547">Nucleotide-binding</keyword>
<keyword id="KW-0648">Protein biosynthesis</keyword>
<keyword id="KW-1185">Reference proteome</keyword>
<comment type="function">
    <text evidence="2">GTP hydrolase that promotes the GTP-dependent binding of aminoacyl-tRNA to the A-site of ribosomes during protein biosynthesis.</text>
</comment>
<comment type="catalytic activity">
    <reaction evidence="2">
        <text>GTP + H2O = GDP + phosphate + H(+)</text>
        <dbReference type="Rhea" id="RHEA:19669"/>
        <dbReference type="ChEBI" id="CHEBI:15377"/>
        <dbReference type="ChEBI" id="CHEBI:15378"/>
        <dbReference type="ChEBI" id="CHEBI:37565"/>
        <dbReference type="ChEBI" id="CHEBI:43474"/>
        <dbReference type="ChEBI" id="CHEBI:58189"/>
        <dbReference type="EC" id="3.6.5.3"/>
    </reaction>
    <physiologicalReaction direction="left-to-right" evidence="2">
        <dbReference type="Rhea" id="RHEA:19670"/>
    </physiologicalReaction>
</comment>
<comment type="subunit">
    <text evidence="2">Monomer.</text>
</comment>
<comment type="subcellular location">
    <subcellularLocation>
        <location evidence="2">Cytoplasm</location>
    </subcellularLocation>
</comment>
<comment type="similarity">
    <text evidence="2">Belongs to the TRAFAC class translation factor GTPase superfamily. Classic translation factor GTPase family. EF-Tu/EF-1A subfamily.</text>
</comment>
<accession>A5GIP0</accession>